<proteinExistence type="inferred from homology"/>
<organism>
    <name type="scientific">Cyanothece sp. (strain PCC 7425 / ATCC 29141)</name>
    <dbReference type="NCBI Taxonomy" id="395961"/>
    <lineage>
        <taxon>Bacteria</taxon>
        <taxon>Bacillati</taxon>
        <taxon>Cyanobacteriota</taxon>
        <taxon>Cyanophyceae</taxon>
        <taxon>Gomontiellales</taxon>
        <taxon>Cyanothecaceae</taxon>
        <taxon>Cyanothece</taxon>
    </lineage>
</organism>
<gene>
    <name evidence="1" type="primary">coaD</name>
    <name type="ordered locus">Cyan7425_3308</name>
</gene>
<dbReference type="EC" id="2.7.7.3" evidence="1"/>
<dbReference type="EMBL" id="CP001344">
    <property type="protein sequence ID" value="ACL45633.1"/>
    <property type="molecule type" value="Genomic_DNA"/>
</dbReference>
<dbReference type="SMR" id="B8HPS4"/>
<dbReference type="STRING" id="395961.Cyan7425_3308"/>
<dbReference type="KEGG" id="cyn:Cyan7425_3308"/>
<dbReference type="eggNOG" id="COG0669">
    <property type="taxonomic scope" value="Bacteria"/>
</dbReference>
<dbReference type="HOGENOM" id="CLU_100149_0_1_3"/>
<dbReference type="OrthoDB" id="9806661at2"/>
<dbReference type="UniPathway" id="UPA00241">
    <property type="reaction ID" value="UER00355"/>
</dbReference>
<dbReference type="GO" id="GO:0005737">
    <property type="term" value="C:cytoplasm"/>
    <property type="evidence" value="ECO:0007669"/>
    <property type="project" value="UniProtKB-SubCell"/>
</dbReference>
<dbReference type="GO" id="GO:0005524">
    <property type="term" value="F:ATP binding"/>
    <property type="evidence" value="ECO:0007669"/>
    <property type="project" value="UniProtKB-KW"/>
</dbReference>
<dbReference type="GO" id="GO:0004595">
    <property type="term" value="F:pantetheine-phosphate adenylyltransferase activity"/>
    <property type="evidence" value="ECO:0007669"/>
    <property type="project" value="UniProtKB-UniRule"/>
</dbReference>
<dbReference type="GO" id="GO:0015937">
    <property type="term" value="P:coenzyme A biosynthetic process"/>
    <property type="evidence" value="ECO:0007669"/>
    <property type="project" value="UniProtKB-UniRule"/>
</dbReference>
<dbReference type="CDD" id="cd02163">
    <property type="entry name" value="PPAT"/>
    <property type="match status" value="1"/>
</dbReference>
<dbReference type="Gene3D" id="3.40.50.620">
    <property type="entry name" value="HUPs"/>
    <property type="match status" value="1"/>
</dbReference>
<dbReference type="HAMAP" id="MF_00151">
    <property type="entry name" value="PPAT_bact"/>
    <property type="match status" value="1"/>
</dbReference>
<dbReference type="InterPro" id="IPR004821">
    <property type="entry name" value="Cyt_trans-like"/>
</dbReference>
<dbReference type="InterPro" id="IPR001980">
    <property type="entry name" value="PPAT"/>
</dbReference>
<dbReference type="InterPro" id="IPR014729">
    <property type="entry name" value="Rossmann-like_a/b/a_fold"/>
</dbReference>
<dbReference type="NCBIfam" id="TIGR01510">
    <property type="entry name" value="coaD_prev_kdtB"/>
    <property type="match status" value="1"/>
</dbReference>
<dbReference type="NCBIfam" id="TIGR00125">
    <property type="entry name" value="cyt_tran_rel"/>
    <property type="match status" value="1"/>
</dbReference>
<dbReference type="PANTHER" id="PTHR21342">
    <property type="entry name" value="PHOSPHOPANTETHEINE ADENYLYLTRANSFERASE"/>
    <property type="match status" value="1"/>
</dbReference>
<dbReference type="PANTHER" id="PTHR21342:SF1">
    <property type="entry name" value="PHOSPHOPANTETHEINE ADENYLYLTRANSFERASE"/>
    <property type="match status" value="1"/>
</dbReference>
<dbReference type="Pfam" id="PF01467">
    <property type="entry name" value="CTP_transf_like"/>
    <property type="match status" value="1"/>
</dbReference>
<dbReference type="PRINTS" id="PR01020">
    <property type="entry name" value="LPSBIOSNTHSS"/>
</dbReference>
<dbReference type="SUPFAM" id="SSF52374">
    <property type="entry name" value="Nucleotidylyl transferase"/>
    <property type="match status" value="1"/>
</dbReference>
<protein>
    <recommendedName>
        <fullName evidence="1">Phosphopantetheine adenylyltransferase</fullName>
        <ecNumber evidence="1">2.7.7.3</ecNumber>
    </recommendedName>
    <alternativeName>
        <fullName evidence="1">Dephospho-CoA pyrophosphorylase</fullName>
    </alternativeName>
    <alternativeName>
        <fullName evidence="1">Pantetheine-phosphate adenylyltransferase</fullName>
        <shortName evidence="1">PPAT</shortName>
    </alternativeName>
</protein>
<comment type="function">
    <text evidence="1">Reversibly transfers an adenylyl group from ATP to 4'-phosphopantetheine, yielding dephospho-CoA (dPCoA) and pyrophosphate.</text>
</comment>
<comment type="catalytic activity">
    <reaction evidence="1">
        <text>(R)-4'-phosphopantetheine + ATP + H(+) = 3'-dephospho-CoA + diphosphate</text>
        <dbReference type="Rhea" id="RHEA:19801"/>
        <dbReference type="ChEBI" id="CHEBI:15378"/>
        <dbReference type="ChEBI" id="CHEBI:30616"/>
        <dbReference type="ChEBI" id="CHEBI:33019"/>
        <dbReference type="ChEBI" id="CHEBI:57328"/>
        <dbReference type="ChEBI" id="CHEBI:61723"/>
        <dbReference type="EC" id="2.7.7.3"/>
    </reaction>
</comment>
<comment type="cofactor">
    <cofactor evidence="1">
        <name>Mg(2+)</name>
        <dbReference type="ChEBI" id="CHEBI:18420"/>
    </cofactor>
</comment>
<comment type="pathway">
    <text evidence="1">Cofactor biosynthesis; coenzyme A biosynthesis; CoA from (R)-pantothenate: step 4/5.</text>
</comment>
<comment type="subunit">
    <text evidence="1">Homohexamer.</text>
</comment>
<comment type="subcellular location">
    <subcellularLocation>
        <location evidence="1">Cytoplasm</location>
    </subcellularLocation>
</comment>
<comment type="similarity">
    <text evidence="1">Belongs to the bacterial CoaD family.</text>
</comment>
<keyword id="KW-0067">ATP-binding</keyword>
<keyword id="KW-0173">Coenzyme A biosynthesis</keyword>
<keyword id="KW-0963">Cytoplasm</keyword>
<keyword id="KW-0460">Magnesium</keyword>
<keyword id="KW-0547">Nucleotide-binding</keyword>
<keyword id="KW-0548">Nucleotidyltransferase</keyword>
<keyword id="KW-0808">Transferase</keyword>
<name>COAD_CYAP4</name>
<reference key="1">
    <citation type="journal article" date="2011" name="MBio">
        <title>Novel metabolic attributes of the genus Cyanothece, comprising a group of unicellular nitrogen-fixing Cyanobacteria.</title>
        <authorList>
            <person name="Bandyopadhyay A."/>
            <person name="Elvitigala T."/>
            <person name="Welsh E."/>
            <person name="Stockel J."/>
            <person name="Liberton M."/>
            <person name="Min H."/>
            <person name="Sherman L.A."/>
            <person name="Pakrasi H.B."/>
        </authorList>
    </citation>
    <scope>NUCLEOTIDE SEQUENCE [LARGE SCALE GENOMIC DNA]</scope>
    <source>
        <strain>PCC 7425 / ATCC 29141</strain>
    </source>
</reference>
<sequence>MIAVYPGSFDPITLGHLDVIERGCKLFETVVVAVSKNPNKIPLFTVEQRIQQIRTCTLHLANVEIDAFHGLTVSYAKMRQAQVLLRGLRAVSDFEYELQMAHTNKSLYPQIETVFLTTANEYSFLSSSQVKEIARFGGSVAHLVPANVAIDLEKCFAQTPTVSTPIAQD</sequence>
<feature type="chain" id="PRO_1000123281" description="Phosphopantetheine adenylyltransferase">
    <location>
        <begin position="1"/>
        <end position="169"/>
    </location>
</feature>
<feature type="binding site" evidence="1">
    <location>
        <begin position="8"/>
        <end position="9"/>
    </location>
    <ligand>
        <name>ATP</name>
        <dbReference type="ChEBI" id="CHEBI:30616"/>
    </ligand>
</feature>
<feature type="binding site" evidence="1">
    <location>
        <position position="8"/>
    </location>
    <ligand>
        <name>substrate</name>
    </ligand>
</feature>
<feature type="binding site" evidence="1">
    <location>
        <position position="16"/>
    </location>
    <ligand>
        <name>ATP</name>
        <dbReference type="ChEBI" id="CHEBI:30616"/>
    </ligand>
</feature>
<feature type="binding site" evidence="1">
    <location>
        <position position="40"/>
    </location>
    <ligand>
        <name>substrate</name>
    </ligand>
</feature>
<feature type="binding site" evidence="1">
    <location>
        <position position="72"/>
    </location>
    <ligand>
        <name>substrate</name>
    </ligand>
</feature>
<feature type="binding site" evidence="1">
    <location>
        <position position="86"/>
    </location>
    <ligand>
        <name>substrate</name>
    </ligand>
</feature>
<feature type="binding site" evidence="1">
    <location>
        <begin position="87"/>
        <end position="89"/>
    </location>
    <ligand>
        <name>ATP</name>
        <dbReference type="ChEBI" id="CHEBI:30616"/>
    </ligand>
</feature>
<feature type="binding site" evidence="1">
    <location>
        <position position="97"/>
    </location>
    <ligand>
        <name>ATP</name>
        <dbReference type="ChEBI" id="CHEBI:30616"/>
    </ligand>
</feature>
<feature type="binding site" evidence="1">
    <location>
        <begin position="122"/>
        <end position="128"/>
    </location>
    <ligand>
        <name>ATP</name>
        <dbReference type="ChEBI" id="CHEBI:30616"/>
    </ligand>
</feature>
<feature type="site" description="Transition state stabilizer" evidence="1">
    <location>
        <position position="16"/>
    </location>
</feature>
<evidence type="ECO:0000255" key="1">
    <source>
        <dbReference type="HAMAP-Rule" id="MF_00151"/>
    </source>
</evidence>
<accession>B8HPS4</accession>